<comment type="function">
    <text evidence="3">Isoform 1 and isoform 2 act as DNA-dependent transcriptional repressors.</text>
</comment>
<comment type="subunit">
    <text evidence="3">Isoforms 1 and 2 can both homo- and hetero-associate.</text>
</comment>
<comment type="interaction">
    <interactant intactId="EBI-12328453">
        <id>Q96N95-3</id>
    </interactant>
    <interactant intactId="EBI-745859">
        <id>P55273</id>
        <label>CDKN2D</label>
    </interactant>
    <organismsDiffer>false</organismsDiffer>
    <experiments>3</experiments>
</comment>
<comment type="interaction">
    <interactant intactId="EBI-12328453">
        <id>Q96N95-3</id>
    </interactant>
    <interactant intactId="EBI-11336487">
        <id>Q2NL68</id>
        <label>PROSER3</label>
    </interactant>
    <organismsDiffer>false</organismsDiffer>
    <experiments>5</experiments>
</comment>
<comment type="interaction">
    <interactant intactId="EBI-12328453">
        <id>Q96N95-3</id>
    </interactant>
    <interactant intactId="EBI-745846">
        <id>P57086</id>
        <label>SCAND1</label>
    </interactant>
    <organismsDiffer>false</organismsDiffer>
    <experiments>6</experiments>
</comment>
<comment type="interaction">
    <interactant intactId="EBI-12328453">
        <id>Q96N95-3</id>
    </interactant>
    <interactant intactId="EBI-3937206">
        <id>Q6PJ21</id>
        <label>SPSB3</label>
    </interactant>
    <organismsDiffer>false</organismsDiffer>
    <experiments>3</experiments>
</comment>
<comment type="interaction">
    <interactant intactId="EBI-12328453">
        <id>Q96N95-3</id>
    </interactant>
    <interactant intactId="EBI-707773">
        <id>P17028</id>
        <label>ZNF24</label>
    </interactant>
    <organismsDiffer>false</organismsDiffer>
    <experiments>5</experiments>
</comment>
<comment type="interaction">
    <interactant intactId="EBI-12328453">
        <id>Q96N95-3</id>
    </interactant>
    <interactant intactId="EBI-740232">
        <id>Q9NWS9-2</id>
        <label>ZNF446</label>
    </interactant>
    <organismsDiffer>false</organismsDiffer>
    <experiments>3</experiments>
</comment>
<comment type="interaction">
    <interactant intactId="EBI-12328453">
        <id>Q96N95-3</id>
    </interactant>
    <interactant intactId="EBI-10281938">
        <id>Q9Y5A6</id>
        <label>ZSCAN21</label>
    </interactant>
    <organismsDiffer>false</organismsDiffer>
    <experiments>3</experiments>
</comment>
<comment type="subcellular location">
    <molecule>Isoform 1</molecule>
    <subcellularLocation>
        <location>Nucleus</location>
    </subcellularLocation>
</comment>
<comment type="subcellular location">
    <molecule>Isoform 2</molecule>
    <subcellularLocation>
        <location>Nucleus</location>
    </subcellularLocation>
    <subcellularLocation>
        <location>Cytoplasm</location>
    </subcellularLocation>
</comment>
<comment type="alternative products">
    <event type="alternative splicing"/>
    <isoform>
        <id>Q96N95-1</id>
        <name>1</name>
        <name>ZNF396-fu</name>
        <sequence type="displayed"/>
    </isoform>
    <isoform>
        <id>Q96N95-2</id>
        <name>2</name>
        <name>Truncated</name>
        <name>ZNF396-nf</name>
        <sequence type="described" ref="VSP_008768 VSP_006923"/>
    </isoform>
    <isoform>
        <id>Q96N95-3</id>
        <name>3</name>
        <sequence type="described" ref="VSP_020993"/>
    </isoform>
</comment>
<comment type="tissue specificity">
    <text evidence="3">Expressed strongly in liver, moderately in skeletal muscle and weakly in kidney, pancreas, spleen and prostate.</text>
</comment>
<comment type="similarity">
    <text evidence="7">Belongs to the krueppel C2H2-type zinc-finger protein family.</text>
</comment>
<gene>
    <name type="primary">ZNF396</name>
    <name type="synonym">ZSCAN14</name>
</gene>
<sequence>MSAKLGKSSSLLTQTSEECNGILTEKMEEEEQTCDPDSSLHWSSSYSPETFRQQFRQFGYQDSPGPHEALSRLWELCHLWLRPEVHTKEQILELLVLEQFLAILPKELQAWVQKHHPENGEETVTMLEDVERELDGPKQIFFGRRKDMIAEKLAPSEITEELPSSQLMPVKKQLQGASWELQSLRPHDEDIKTTNVKSASRQKTSLGIELHCNVSNILHMNGSQSSTYRGTYEQDGRFEKRQGNPSWKKQQKCDECGKIFSQSSALILHQRIHSGKKPYACDECAKAFSRSAILIQHRRTHTGEKPYKCHDCGKAFSQSSNLFRHRKRHIRKKVP</sequence>
<evidence type="ECO:0000255" key="1">
    <source>
        <dbReference type="PROSITE-ProRule" id="PRU00042"/>
    </source>
</evidence>
<evidence type="ECO:0000255" key="2">
    <source>
        <dbReference type="PROSITE-ProRule" id="PRU00187"/>
    </source>
</evidence>
<evidence type="ECO:0000269" key="3">
    <source>
    </source>
</evidence>
<evidence type="ECO:0000303" key="4">
    <source>
    </source>
</evidence>
<evidence type="ECO:0000303" key="5">
    <source>
    </source>
</evidence>
<evidence type="ECO:0000303" key="6">
    <source>
    </source>
</evidence>
<evidence type="ECO:0000305" key="7"/>
<feature type="chain" id="PRO_0000047563" description="Zinc finger protein 396">
    <location>
        <begin position="1"/>
        <end position="335"/>
    </location>
</feature>
<feature type="domain" description="SCAN box" evidence="2">
    <location>
        <begin position="52"/>
        <end position="134"/>
    </location>
</feature>
<feature type="zinc finger region" description="C2H2-type 1" evidence="1">
    <location>
        <begin position="251"/>
        <end position="273"/>
    </location>
</feature>
<feature type="zinc finger region" description="C2H2-type 2" evidence="1">
    <location>
        <begin position="279"/>
        <end position="301"/>
    </location>
</feature>
<feature type="zinc finger region" description="C2H2-type 3" evidence="1">
    <location>
        <begin position="307"/>
        <end position="329"/>
    </location>
</feature>
<feature type="splice variant" id="VSP_008768" description="In isoform 2." evidence="4">
    <original>DEDIKTTNVKSASRQKTSLGIEL</original>
    <variation>GEGAGFSSCWKVWGPSAHHTHLS</variation>
    <location>
        <begin position="188"/>
        <end position="210"/>
    </location>
</feature>
<feature type="splice variant" id="VSP_006923" description="In isoform 2." evidence="4">
    <location>
        <begin position="211"/>
        <end position="335"/>
    </location>
</feature>
<feature type="splice variant" id="VSP_020993" description="In isoform 3." evidence="5 6">
    <original>GEKPYKCHDCGKAFSQSSNLFRHRKRHIRKKVP</original>
    <variation>DSKYEHAIAEAQKNMYFKTRLKCPRSLSGGR</variation>
    <location>
        <begin position="303"/>
        <end position="335"/>
    </location>
</feature>
<feature type="sequence variant" id="VAR_057418" description="In dbSNP:rs9963473.">
    <original>H</original>
    <variation>L</variation>
    <location>
        <position position="211"/>
    </location>
</feature>
<feature type="sequence conflict" description="In Ref. 1; AAM09559." evidence="7" ref="1">
    <original>T</original>
    <variation>A</variation>
    <location>
        <position position="125"/>
    </location>
</feature>
<accession>Q96N95</accession>
<accession>A1L3V0</accession>
<accession>Q8NF98</accession>
<accession>Q8TD80</accession>
<name>ZN396_HUMAN</name>
<reference key="1">
    <citation type="journal article" date="2003" name="Gene">
        <title>Identification and characterization of two novel human SCAN domain-containing zinc finger genes ZNF396 and ZNF397.</title>
        <authorList>
            <person name="Wu Y."/>
            <person name="Yu L."/>
            <person name="Bi G."/>
            <person name="Luo K."/>
            <person name="Zhou G."/>
            <person name="Zhao S."/>
        </authorList>
    </citation>
    <scope>NUCLEOTIDE SEQUENCE [MRNA] (ISOFORMS 1 AND 2)</scope>
    <scope>FUNCTION</scope>
    <scope>SUBUNIT</scope>
    <scope>SUBCELLULAR LOCATION</scope>
    <scope>TISSUE SPECIFICITY</scope>
    <source>
        <tissue>Hepatoma</tissue>
    </source>
</reference>
<reference key="2">
    <citation type="journal article" date="2004" name="Nat. Genet.">
        <title>Complete sequencing and characterization of 21,243 full-length human cDNAs.</title>
        <authorList>
            <person name="Ota T."/>
            <person name="Suzuki Y."/>
            <person name="Nishikawa T."/>
            <person name="Otsuki T."/>
            <person name="Sugiyama T."/>
            <person name="Irie R."/>
            <person name="Wakamatsu A."/>
            <person name="Hayashi K."/>
            <person name="Sato H."/>
            <person name="Nagai K."/>
            <person name="Kimura K."/>
            <person name="Makita H."/>
            <person name="Sekine M."/>
            <person name="Obayashi M."/>
            <person name="Nishi T."/>
            <person name="Shibahara T."/>
            <person name="Tanaka T."/>
            <person name="Ishii S."/>
            <person name="Yamamoto J."/>
            <person name="Saito K."/>
            <person name="Kawai Y."/>
            <person name="Isono Y."/>
            <person name="Nakamura Y."/>
            <person name="Nagahari K."/>
            <person name="Murakami K."/>
            <person name="Yasuda T."/>
            <person name="Iwayanagi T."/>
            <person name="Wagatsuma M."/>
            <person name="Shiratori A."/>
            <person name="Sudo H."/>
            <person name="Hosoiri T."/>
            <person name="Kaku Y."/>
            <person name="Kodaira H."/>
            <person name="Kondo H."/>
            <person name="Sugawara M."/>
            <person name="Takahashi M."/>
            <person name="Kanda K."/>
            <person name="Yokoi T."/>
            <person name="Furuya T."/>
            <person name="Kikkawa E."/>
            <person name="Omura Y."/>
            <person name="Abe K."/>
            <person name="Kamihara K."/>
            <person name="Katsuta N."/>
            <person name="Sato K."/>
            <person name="Tanikawa M."/>
            <person name="Yamazaki M."/>
            <person name="Ninomiya K."/>
            <person name="Ishibashi T."/>
            <person name="Yamashita H."/>
            <person name="Murakawa K."/>
            <person name="Fujimori K."/>
            <person name="Tanai H."/>
            <person name="Kimata M."/>
            <person name="Watanabe M."/>
            <person name="Hiraoka S."/>
            <person name="Chiba Y."/>
            <person name="Ishida S."/>
            <person name="Ono Y."/>
            <person name="Takiguchi S."/>
            <person name="Watanabe S."/>
            <person name="Yosida M."/>
            <person name="Hotuta T."/>
            <person name="Kusano J."/>
            <person name="Kanehori K."/>
            <person name="Takahashi-Fujii A."/>
            <person name="Hara H."/>
            <person name="Tanase T.-O."/>
            <person name="Nomura Y."/>
            <person name="Togiya S."/>
            <person name="Komai F."/>
            <person name="Hara R."/>
            <person name="Takeuchi K."/>
            <person name="Arita M."/>
            <person name="Imose N."/>
            <person name="Musashino K."/>
            <person name="Yuuki H."/>
            <person name="Oshima A."/>
            <person name="Sasaki N."/>
            <person name="Aotsuka S."/>
            <person name="Yoshikawa Y."/>
            <person name="Matsunawa H."/>
            <person name="Ichihara T."/>
            <person name="Shiohata N."/>
            <person name="Sano S."/>
            <person name="Moriya S."/>
            <person name="Momiyama H."/>
            <person name="Satoh N."/>
            <person name="Takami S."/>
            <person name="Terashima Y."/>
            <person name="Suzuki O."/>
            <person name="Nakagawa S."/>
            <person name="Senoh A."/>
            <person name="Mizoguchi H."/>
            <person name="Goto Y."/>
            <person name="Shimizu F."/>
            <person name="Wakebe H."/>
            <person name="Hishigaki H."/>
            <person name="Watanabe T."/>
            <person name="Sugiyama A."/>
            <person name="Takemoto M."/>
            <person name="Kawakami B."/>
            <person name="Yamazaki M."/>
            <person name="Watanabe K."/>
            <person name="Kumagai A."/>
            <person name="Itakura S."/>
            <person name="Fukuzumi Y."/>
            <person name="Fujimori Y."/>
            <person name="Komiyama M."/>
            <person name="Tashiro H."/>
            <person name="Tanigami A."/>
            <person name="Fujiwara T."/>
            <person name="Ono T."/>
            <person name="Yamada K."/>
            <person name="Fujii Y."/>
            <person name="Ozaki K."/>
            <person name="Hirao M."/>
            <person name="Ohmori Y."/>
            <person name="Kawabata A."/>
            <person name="Hikiji T."/>
            <person name="Kobatake N."/>
            <person name="Inagaki H."/>
            <person name="Ikema Y."/>
            <person name="Okamoto S."/>
            <person name="Okitani R."/>
            <person name="Kawakami T."/>
            <person name="Noguchi S."/>
            <person name="Itoh T."/>
            <person name="Shigeta K."/>
            <person name="Senba T."/>
            <person name="Matsumura K."/>
            <person name="Nakajima Y."/>
            <person name="Mizuno T."/>
            <person name="Morinaga M."/>
            <person name="Sasaki M."/>
            <person name="Togashi T."/>
            <person name="Oyama M."/>
            <person name="Hata H."/>
            <person name="Watanabe M."/>
            <person name="Komatsu T."/>
            <person name="Mizushima-Sugano J."/>
            <person name="Satoh T."/>
            <person name="Shirai Y."/>
            <person name="Takahashi Y."/>
            <person name="Nakagawa K."/>
            <person name="Okumura K."/>
            <person name="Nagase T."/>
            <person name="Nomura N."/>
            <person name="Kikuchi H."/>
            <person name="Masuho Y."/>
            <person name="Yamashita R."/>
            <person name="Nakai K."/>
            <person name="Yada T."/>
            <person name="Nakamura Y."/>
            <person name="Ohara O."/>
            <person name="Isogai T."/>
            <person name="Sugano S."/>
        </authorList>
    </citation>
    <scope>NUCLEOTIDE SEQUENCE [LARGE SCALE MRNA] (ISOFORM 3)</scope>
    <source>
        <tissue>Kidney</tissue>
    </source>
</reference>
<reference key="3">
    <citation type="submission" date="2005-07" db="EMBL/GenBank/DDBJ databases">
        <authorList>
            <person name="Mural R.J."/>
            <person name="Istrail S."/>
            <person name="Sutton G.G."/>
            <person name="Florea L."/>
            <person name="Halpern A.L."/>
            <person name="Mobarry C.M."/>
            <person name="Lippert R."/>
            <person name="Walenz B."/>
            <person name="Shatkay H."/>
            <person name="Dew I."/>
            <person name="Miller J.R."/>
            <person name="Flanigan M.J."/>
            <person name="Edwards N.J."/>
            <person name="Bolanos R."/>
            <person name="Fasulo D."/>
            <person name="Halldorsson B.V."/>
            <person name="Hannenhalli S."/>
            <person name="Turner R."/>
            <person name="Yooseph S."/>
            <person name="Lu F."/>
            <person name="Nusskern D.R."/>
            <person name="Shue B.C."/>
            <person name="Zheng X.H."/>
            <person name="Zhong F."/>
            <person name="Delcher A.L."/>
            <person name="Huson D.H."/>
            <person name="Kravitz S.A."/>
            <person name="Mouchard L."/>
            <person name="Reinert K."/>
            <person name="Remington K.A."/>
            <person name="Clark A.G."/>
            <person name="Waterman M.S."/>
            <person name="Eichler E.E."/>
            <person name="Adams M.D."/>
            <person name="Hunkapiller M.W."/>
            <person name="Myers E.W."/>
            <person name="Venter J.C."/>
        </authorList>
    </citation>
    <scope>NUCLEOTIDE SEQUENCE [LARGE SCALE GENOMIC DNA]</scope>
</reference>
<reference key="4">
    <citation type="journal article" date="2004" name="Genome Res.">
        <title>The status, quality, and expansion of the NIH full-length cDNA project: the Mammalian Gene Collection (MGC).</title>
        <authorList>
            <consortium name="The MGC Project Team"/>
        </authorList>
    </citation>
    <scope>NUCLEOTIDE SEQUENCE [LARGE SCALE MRNA] (ISOFORM 3)</scope>
    <source>
        <tissue>Brain</tissue>
    </source>
</reference>
<proteinExistence type="evidence at protein level"/>
<keyword id="KW-0025">Alternative splicing</keyword>
<keyword id="KW-0963">Cytoplasm</keyword>
<keyword id="KW-0238">DNA-binding</keyword>
<keyword id="KW-0479">Metal-binding</keyword>
<keyword id="KW-0539">Nucleus</keyword>
<keyword id="KW-1267">Proteomics identification</keyword>
<keyword id="KW-1185">Reference proteome</keyword>
<keyword id="KW-0677">Repeat</keyword>
<keyword id="KW-0678">Repressor</keyword>
<keyword id="KW-0804">Transcription</keyword>
<keyword id="KW-0805">Transcription regulation</keyword>
<keyword id="KW-0862">Zinc</keyword>
<keyword id="KW-0863">Zinc-finger</keyword>
<organism>
    <name type="scientific">Homo sapiens</name>
    <name type="common">Human</name>
    <dbReference type="NCBI Taxonomy" id="9606"/>
    <lineage>
        <taxon>Eukaryota</taxon>
        <taxon>Metazoa</taxon>
        <taxon>Chordata</taxon>
        <taxon>Craniata</taxon>
        <taxon>Vertebrata</taxon>
        <taxon>Euteleostomi</taxon>
        <taxon>Mammalia</taxon>
        <taxon>Eutheria</taxon>
        <taxon>Euarchontoglires</taxon>
        <taxon>Primates</taxon>
        <taxon>Haplorrhini</taxon>
        <taxon>Catarrhini</taxon>
        <taxon>Hominidae</taxon>
        <taxon>Homo</taxon>
    </lineage>
</organism>
<protein>
    <recommendedName>
        <fullName>Zinc finger protein 396</fullName>
    </recommendedName>
    <alternativeName>
        <fullName>Zinc finger and SCAN domain-containing protein 14</fullName>
    </alternativeName>
</protein>
<dbReference type="EMBL" id="AF492004">
    <property type="protein sequence ID" value="AAM09559.3"/>
    <property type="molecule type" value="mRNA"/>
</dbReference>
<dbReference type="EMBL" id="AF533251">
    <property type="protein sequence ID" value="AAM95992.1"/>
    <property type="molecule type" value="mRNA"/>
</dbReference>
<dbReference type="EMBL" id="AK055775">
    <property type="protein sequence ID" value="BAB71010.1"/>
    <property type="molecule type" value="mRNA"/>
</dbReference>
<dbReference type="EMBL" id="CH471088">
    <property type="protein sequence ID" value="EAX01352.1"/>
    <property type="molecule type" value="Genomic_DNA"/>
</dbReference>
<dbReference type="EMBL" id="BC130288">
    <property type="protein sequence ID" value="AAI30289.1"/>
    <property type="molecule type" value="mRNA"/>
</dbReference>
<dbReference type="EMBL" id="BC136314">
    <property type="protein sequence ID" value="AAI36315.1"/>
    <property type="molecule type" value="mRNA"/>
</dbReference>
<dbReference type="CCDS" id="CCDS11913.1">
    <molecule id="Q96N95-3"/>
</dbReference>
<dbReference type="CCDS" id="CCDS82246.1">
    <molecule id="Q96N95-2"/>
</dbReference>
<dbReference type="CCDS" id="CCDS82247.1">
    <molecule id="Q96N95-1"/>
</dbReference>
<dbReference type="RefSeq" id="NP_001309215.1">
    <molecule id="Q96N95-1"/>
    <property type="nucleotide sequence ID" value="NM_001322286.2"/>
</dbReference>
<dbReference type="RefSeq" id="NP_001309219.1">
    <molecule id="Q96N95-1"/>
    <property type="nucleotide sequence ID" value="NM_001322290.2"/>
</dbReference>
<dbReference type="RefSeq" id="NP_001309220.1">
    <molecule id="Q96N95-2"/>
    <property type="nucleotide sequence ID" value="NM_001322291.2"/>
</dbReference>
<dbReference type="RefSeq" id="NP_665699.1">
    <molecule id="Q96N95-3"/>
    <property type="nucleotide sequence ID" value="NM_145756.3"/>
</dbReference>
<dbReference type="RefSeq" id="XP_006722495.1">
    <molecule id="Q96N95-1"/>
    <property type="nucleotide sequence ID" value="XM_006722432.4"/>
</dbReference>
<dbReference type="RefSeq" id="XP_016881176.1">
    <molecule id="Q96N95-1"/>
    <property type="nucleotide sequence ID" value="XM_017025687.2"/>
</dbReference>
<dbReference type="RefSeq" id="XP_016881177.1">
    <property type="nucleotide sequence ID" value="XM_017025688.1"/>
</dbReference>
<dbReference type="RefSeq" id="XP_054174447.1">
    <molecule id="Q96N95-1"/>
    <property type="nucleotide sequence ID" value="XM_054318472.1"/>
</dbReference>
<dbReference type="RefSeq" id="XP_054174448.1">
    <molecule id="Q96N95-1"/>
    <property type="nucleotide sequence ID" value="XM_054318473.1"/>
</dbReference>
<dbReference type="SMR" id="Q96N95"/>
<dbReference type="BioGRID" id="128934">
    <property type="interactions" value="21"/>
</dbReference>
<dbReference type="FunCoup" id="Q96N95">
    <property type="interactions" value="140"/>
</dbReference>
<dbReference type="IntAct" id="Q96N95">
    <property type="interactions" value="19"/>
</dbReference>
<dbReference type="STRING" id="9606.ENSP00000466500"/>
<dbReference type="iPTMnet" id="Q96N95"/>
<dbReference type="PhosphoSitePlus" id="Q96N95"/>
<dbReference type="BioMuta" id="ZNF396"/>
<dbReference type="DMDM" id="38258950"/>
<dbReference type="jPOST" id="Q96N95"/>
<dbReference type="MassIVE" id="Q96N95"/>
<dbReference type="PaxDb" id="9606-ENSP00000302310"/>
<dbReference type="PeptideAtlas" id="Q96N95"/>
<dbReference type="ProteomicsDB" id="77486">
    <molecule id="Q96N95-1"/>
</dbReference>
<dbReference type="ProteomicsDB" id="77487">
    <molecule id="Q96N95-2"/>
</dbReference>
<dbReference type="ProteomicsDB" id="77488">
    <molecule id="Q96N95-3"/>
</dbReference>
<dbReference type="TopDownProteomics" id="Q96N95-3">
    <molecule id="Q96N95-3"/>
</dbReference>
<dbReference type="Antibodypedia" id="1833">
    <property type="antibodies" value="116 antibodies from 21 providers"/>
</dbReference>
<dbReference type="DNASU" id="252884"/>
<dbReference type="Ensembl" id="ENST00000306346.5">
    <molecule id="Q96N95-3"/>
    <property type="protein sequence ID" value="ENSP00000302310.1"/>
    <property type="gene ID" value="ENSG00000186496.12"/>
</dbReference>
<dbReference type="Ensembl" id="ENST00000586687.5">
    <molecule id="Q96N95-2"/>
    <property type="protein sequence ID" value="ENSP00000467275.1"/>
    <property type="gene ID" value="ENSG00000186496.12"/>
</dbReference>
<dbReference type="Ensembl" id="ENST00000589332.7">
    <molecule id="Q96N95-1"/>
    <property type="protein sequence ID" value="ENSP00000466500.1"/>
    <property type="gene ID" value="ENSG00000186496.12"/>
</dbReference>
<dbReference type="GeneID" id="252884"/>
<dbReference type="KEGG" id="hsa:252884"/>
<dbReference type="MANE-Select" id="ENST00000589332.7">
    <property type="protein sequence ID" value="ENSP00000466500.1"/>
    <property type="RefSeq nucleotide sequence ID" value="NM_001322286.2"/>
    <property type="RefSeq protein sequence ID" value="NP_001309215.1"/>
</dbReference>
<dbReference type="UCSC" id="uc010xcf.1">
    <molecule id="Q96N95-1"/>
    <property type="organism name" value="human"/>
</dbReference>
<dbReference type="AGR" id="HGNC:18824"/>
<dbReference type="CTD" id="252884"/>
<dbReference type="DisGeNET" id="252884"/>
<dbReference type="GeneCards" id="ZNF396"/>
<dbReference type="HGNC" id="HGNC:18824">
    <property type="gene designation" value="ZNF396"/>
</dbReference>
<dbReference type="HPA" id="ENSG00000186496">
    <property type="expression patterns" value="Low tissue specificity"/>
</dbReference>
<dbReference type="MIM" id="609600">
    <property type="type" value="gene"/>
</dbReference>
<dbReference type="neXtProt" id="NX_Q96N95"/>
<dbReference type="OpenTargets" id="ENSG00000186496"/>
<dbReference type="PharmGKB" id="PA38697"/>
<dbReference type="VEuPathDB" id="HostDB:ENSG00000186496"/>
<dbReference type="eggNOG" id="KOG1721">
    <property type="taxonomic scope" value="Eukaryota"/>
</dbReference>
<dbReference type="GeneTree" id="ENSGT00940000163395"/>
<dbReference type="HOGENOM" id="CLU_002678_49_3_1"/>
<dbReference type="InParanoid" id="Q96N95"/>
<dbReference type="OMA" id="IELHYDV"/>
<dbReference type="OrthoDB" id="6077919at2759"/>
<dbReference type="PAN-GO" id="Q96N95">
    <property type="GO annotations" value="3 GO annotations based on evolutionary models"/>
</dbReference>
<dbReference type="PhylomeDB" id="Q96N95"/>
<dbReference type="TreeFam" id="TF338304"/>
<dbReference type="PathwayCommons" id="Q96N95"/>
<dbReference type="SignaLink" id="Q96N95"/>
<dbReference type="BioGRID-ORCS" id="252884">
    <property type="hits" value="21 hits in 1172 CRISPR screens"/>
</dbReference>
<dbReference type="ChiTaRS" id="ZNF396">
    <property type="organism name" value="human"/>
</dbReference>
<dbReference type="GenomeRNAi" id="252884"/>
<dbReference type="Pharos" id="Q96N95">
    <property type="development level" value="Tbio"/>
</dbReference>
<dbReference type="PRO" id="PR:Q96N95"/>
<dbReference type="Proteomes" id="UP000005640">
    <property type="component" value="Chromosome 18"/>
</dbReference>
<dbReference type="RNAct" id="Q96N95">
    <property type="molecule type" value="protein"/>
</dbReference>
<dbReference type="Bgee" id="ENSG00000186496">
    <property type="expression patterns" value="Expressed in buccal mucosa cell and 128 other cell types or tissues"/>
</dbReference>
<dbReference type="ExpressionAtlas" id="Q96N95">
    <property type="expression patterns" value="baseline and differential"/>
</dbReference>
<dbReference type="GO" id="GO:0000785">
    <property type="term" value="C:chromatin"/>
    <property type="evidence" value="ECO:0000247"/>
    <property type="project" value="NTNU_SB"/>
</dbReference>
<dbReference type="GO" id="GO:0005737">
    <property type="term" value="C:cytoplasm"/>
    <property type="evidence" value="ECO:0000314"/>
    <property type="project" value="UniProtKB"/>
</dbReference>
<dbReference type="GO" id="GO:0005634">
    <property type="term" value="C:nucleus"/>
    <property type="evidence" value="ECO:0000314"/>
    <property type="project" value="UniProtKB"/>
</dbReference>
<dbReference type="GO" id="GO:0000981">
    <property type="term" value="F:DNA-binding transcription factor activity, RNA polymerase II-specific"/>
    <property type="evidence" value="ECO:0000247"/>
    <property type="project" value="NTNU_SB"/>
</dbReference>
<dbReference type="GO" id="GO:0046982">
    <property type="term" value="F:protein heterodimerization activity"/>
    <property type="evidence" value="ECO:0000353"/>
    <property type="project" value="UniProtKB"/>
</dbReference>
<dbReference type="GO" id="GO:0042803">
    <property type="term" value="F:protein homodimerization activity"/>
    <property type="evidence" value="ECO:0000353"/>
    <property type="project" value="UniProtKB"/>
</dbReference>
<dbReference type="GO" id="GO:0000978">
    <property type="term" value="F:RNA polymerase II cis-regulatory region sequence-specific DNA binding"/>
    <property type="evidence" value="ECO:0000318"/>
    <property type="project" value="GO_Central"/>
</dbReference>
<dbReference type="GO" id="GO:1990837">
    <property type="term" value="F:sequence-specific double-stranded DNA binding"/>
    <property type="evidence" value="ECO:0000314"/>
    <property type="project" value="ARUK-UCL"/>
</dbReference>
<dbReference type="GO" id="GO:0008270">
    <property type="term" value="F:zinc ion binding"/>
    <property type="evidence" value="ECO:0007669"/>
    <property type="project" value="UniProtKB-KW"/>
</dbReference>
<dbReference type="GO" id="GO:0045892">
    <property type="term" value="P:negative regulation of DNA-templated transcription"/>
    <property type="evidence" value="ECO:0000314"/>
    <property type="project" value="UniProtKB"/>
</dbReference>
<dbReference type="GO" id="GO:0006357">
    <property type="term" value="P:regulation of transcription by RNA polymerase II"/>
    <property type="evidence" value="ECO:0000318"/>
    <property type="project" value="GO_Central"/>
</dbReference>
<dbReference type="CDD" id="cd07936">
    <property type="entry name" value="SCAN"/>
    <property type="match status" value="1"/>
</dbReference>
<dbReference type="FunFam" id="3.30.160.60:FF:000512">
    <property type="entry name" value="zinc finger protein 197 isoform X1"/>
    <property type="match status" value="1"/>
</dbReference>
<dbReference type="FunFam" id="3.30.160.60:FF:002239">
    <property type="entry name" value="Zinc finger protein 226"/>
    <property type="match status" value="1"/>
</dbReference>
<dbReference type="FunFam" id="1.10.4020.10:FF:000001">
    <property type="entry name" value="zinc finger protein 263 isoform X1"/>
    <property type="match status" value="1"/>
</dbReference>
<dbReference type="FunFam" id="3.30.160.60:FF:000785">
    <property type="entry name" value="zinc finger protein 648"/>
    <property type="match status" value="1"/>
</dbReference>
<dbReference type="Gene3D" id="3.30.160.60">
    <property type="entry name" value="Classic Zinc Finger"/>
    <property type="match status" value="3"/>
</dbReference>
<dbReference type="Gene3D" id="1.10.4020.10">
    <property type="entry name" value="DNA breaking-rejoining enzymes"/>
    <property type="match status" value="1"/>
</dbReference>
<dbReference type="InterPro" id="IPR050916">
    <property type="entry name" value="SCAN-C2H2_zinc_finger"/>
</dbReference>
<dbReference type="InterPro" id="IPR003309">
    <property type="entry name" value="SCAN_dom"/>
</dbReference>
<dbReference type="InterPro" id="IPR038269">
    <property type="entry name" value="SCAN_sf"/>
</dbReference>
<dbReference type="InterPro" id="IPR036236">
    <property type="entry name" value="Znf_C2H2_sf"/>
</dbReference>
<dbReference type="InterPro" id="IPR013087">
    <property type="entry name" value="Znf_C2H2_type"/>
</dbReference>
<dbReference type="PANTHER" id="PTHR45935">
    <property type="entry name" value="PROTEIN ZBED8-RELATED"/>
    <property type="match status" value="1"/>
</dbReference>
<dbReference type="PANTHER" id="PTHR45935:SF28">
    <property type="entry name" value="SCAN DOMAIN-CONTAINING PROTEIN 3"/>
    <property type="match status" value="1"/>
</dbReference>
<dbReference type="Pfam" id="PF02023">
    <property type="entry name" value="SCAN"/>
    <property type="match status" value="1"/>
</dbReference>
<dbReference type="Pfam" id="PF00096">
    <property type="entry name" value="zf-C2H2"/>
    <property type="match status" value="3"/>
</dbReference>
<dbReference type="SMART" id="SM00431">
    <property type="entry name" value="SCAN"/>
    <property type="match status" value="1"/>
</dbReference>
<dbReference type="SMART" id="SM00355">
    <property type="entry name" value="ZnF_C2H2"/>
    <property type="match status" value="3"/>
</dbReference>
<dbReference type="SUPFAM" id="SSF57667">
    <property type="entry name" value="beta-beta-alpha zinc fingers"/>
    <property type="match status" value="2"/>
</dbReference>
<dbReference type="SUPFAM" id="SSF47353">
    <property type="entry name" value="Retrovirus capsid dimerization domain-like"/>
    <property type="match status" value="1"/>
</dbReference>
<dbReference type="PROSITE" id="PS50804">
    <property type="entry name" value="SCAN_BOX"/>
    <property type="match status" value="1"/>
</dbReference>
<dbReference type="PROSITE" id="PS00028">
    <property type="entry name" value="ZINC_FINGER_C2H2_1"/>
    <property type="match status" value="3"/>
</dbReference>
<dbReference type="PROSITE" id="PS50157">
    <property type="entry name" value="ZINC_FINGER_C2H2_2"/>
    <property type="match status" value="3"/>
</dbReference>